<keyword id="KW-0325">Glycoprotein</keyword>
<keyword id="KW-0472">Membrane</keyword>
<keyword id="KW-1185">Reference proteome</keyword>
<keyword id="KW-0812">Transmembrane</keyword>
<keyword id="KW-1133">Transmembrane helix</keyword>
<evidence type="ECO:0000255" key="1"/>
<evidence type="ECO:0000305" key="2"/>
<reference key="1">
    <citation type="journal article" date="2004" name="Science">
        <title>The 1.2-megabase genome sequence of Mimivirus.</title>
        <authorList>
            <person name="Raoult D."/>
            <person name="Audic S."/>
            <person name="Robert C."/>
            <person name="Abergel C."/>
            <person name="Renesto P."/>
            <person name="Ogata H."/>
            <person name="La Scola B."/>
            <person name="Susan M."/>
            <person name="Claverie J.-M."/>
        </authorList>
    </citation>
    <scope>NUCLEOTIDE SEQUENCE [LARGE SCALE GENOMIC DNA]</scope>
    <source>
        <strain>Rowbotham-Bradford</strain>
    </source>
</reference>
<organism>
    <name type="scientific">Acanthamoeba polyphaga mimivirus</name>
    <name type="common">APMV</name>
    <dbReference type="NCBI Taxonomy" id="212035"/>
    <lineage>
        <taxon>Viruses</taxon>
        <taxon>Varidnaviria</taxon>
        <taxon>Bamfordvirae</taxon>
        <taxon>Nucleocytoviricota</taxon>
        <taxon>Megaviricetes</taxon>
        <taxon>Imitervirales</taxon>
        <taxon>Mimiviridae</taxon>
        <taxon>Megamimivirinae</taxon>
        <taxon>Mimivirus</taxon>
        <taxon>Mimivirus bradfordmassiliense</taxon>
    </lineage>
</organism>
<gene>
    <name type="ordered locus">MIMI_L153</name>
</gene>
<dbReference type="EMBL" id="AY653733">
    <property type="protein sequence ID" value="AAV50428.1"/>
    <property type="molecule type" value="Genomic_DNA"/>
</dbReference>
<dbReference type="SMR" id="Q5UPL7"/>
<dbReference type="KEGG" id="vg:9924753"/>
<dbReference type="OrthoDB" id="27907at10239"/>
<dbReference type="Proteomes" id="UP000001134">
    <property type="component" value="Genome"/>
</dbReference>
<dbReference type="GO" id="GO:0016020">
    <property type="term" value="C:membrane"/>
    <property type="evidence" value="ECO:0007669"/>
    <property type="project" value="UniProtKB-SubCell"/>
</dbReference>
<dbReference type="Gene3D" id="1.20.1260.10">
    <property type="match status" value="1"/>
</dbReference>
<dbReference type="InterPro" id="IPR005183">
    <property type="entry name" value="DUF305_CopM-like"/>
</dbReference>
<dbReference type="InterPro" id="IPR012347">
    <property type="entry name" value="Ferritin-like"/>
</dbReference>
<dbReference type="PANTHER" id="PTHR36933">
    <property type="entry name" value="SLL0788 PROTEIN"/>
    <property type="match status" value="1"/>
</dbReference>
<dbReference type="PANTHER" id="PTHR36933:SF1">
    <property type="entry name" value="SLL0788 PROTEIN"/>
    <property type="match status" value="1"/>
</dbReference>
<dbReference type="Pfam" id="PF03713">
    <property type="entry name" value="DUF305"/>
    <property type="match status" value="1"/>
</dbReference>
<organismHost>
    <name type="scientific">Acanthamoeba polyphaga</name>
    <name type="common">Amoeba</name>
    <dbReference type="NCBI Taxonomy" id="5757"/>
</organismHost>
<feature type="chain" id="PRO_0000253203" description="Uncharacterized protein L153">
    <location>
        <begin position="1"/>
        <end position="152"/>
    </location>
</feature>
<feature type="transmembrane region" description="Helical" evidence="1">
    <location>
        <begin position="5"/>
        <end position="25"/>
    </location>
</feature>
<feature type="transmembrane region" description="Helical" evidence="1">
    <location>
        <begin position="36"/>
        <end position="56"/>
    </location>
</feature>
<feature type="transmembrane region" description="Helical" evidence="1">
    <location>
        <begin position="68"/>
        <end position="88"/>
    </location>
</feature>
<feature type="glycosylation site" description="N-linked (GlcNAc...) asparagine; by host" evidence="1">
    <location>
        <position position="2"/>
    </location>
</feature>
<feature type="glycosylation site" description="N-linked (GlcNAc...) asparagine; by host" evidence="1">
    <location>
        <position position="113"/>
    </location>
</feature>
<sequence length="152" mass="17611">MNNSMILLMVIASFVAGYLSTMNLWANSIGDIRLHLNDFYMVLLMVGWMIVMCYILMKSHMGITKTQLIITITIIIIIVYAIRTQAFIDDKQYLNGMIPHHSMAITMSKWIVNRTKDPRIKQLATDIIISQQNEINEMNSILDERKLQNKVF</sequence>
<comment type="subcellular location">
    <subcellularLocation>
        <location evidence="2">Membrane</location>
        <topology evidence="2">Multi-pass membrane protein</topology>
    </subcellularLocation>
</comment>
<name>YL153_MIMIV</name>
<proteinExistence type="predicted"/>
<protein>
    <recommendedName>
        <fullName>Uncharacterized protein L153</fullName>
    </recommendedName>
</protein>
<accession>Q5UPL7</accession>